<protein>
    <recommendedName>
        <fullName evidence="1">Large ribosomal subunit protein uL13c</fullName>
    </recommendedName>
    <alternativeName>
        <fullName evidence="2">50S ribosomal protein L13, chloroplastic</fullName>
    </alternativeName>
</protein>
<keyword id="KW-0150">Chloroplast</keyword>
<keyword id="KW-0934">Plastid</keyword>
<keyword id="KW-0687">Ribonucleoprotein</keyword>
<keyword id="KW-0689">Ribosomal protein</keyword>
<feature type="chain" id="PRO_0000133767" description="Large ribosomal subunit protein uL13c">
    <location>
        <begin position="1"/>
        <end position="139"/>
    </location>
</feature>
<comment type="subunit">
    <text evidence="1">Part of the 50S ribosomal subunit.</text>
</comment>
<comment type="subcellular location">
    <subcellularLocation>
        <location>Plastid</location>
        <location>Chloroplast</location>
    </subcellularLocation>
</comment>
<comment type="similarity">
    <text evidence="1">Belongs to the universal ribosomal protein uL13 family.</text>
</comment>
<geneLocation type="chloroplast"/>
<sequence>MNETFIPASDYKKKNWCLIDCKDQKLGRIAVVISRLLSGKQKLHYHPAFDVGDYVVVINAQDMIFDSQQPRFSVNVPGRPGRLLKQVINALPSQLLMTAIYGMLPEGSAKKSLPKRLKIYNGPDHPHAAQNPIKLDEFI</sequence>
<gene>
    <name evidence="1" type="primary">rpl13</name>
</gene>
<evidence type="ECO:0000255" key="1">
    <source>
        <dbReference type="HAMAP-Rule" id="MF_01366"/>
    </source>
</evidence>
<evidence type="ECO:0000305" key="2"/>
<dbReference type="EMBL" id="Z67753">
    <property type="protein sequence ID" value="CAA91626.1"/>
    <property type="molecule type" value="Genomic_DNA"/>
</dbReference>
<dbReference type="PIR" id="S78253">
    <property type="entry name" value="S78253"/>
</dbReference>
<dbReference type="RefSeq" id="NP_043594.1">
    <property type="nucleotide sequence ID" value="NC_001713.1"/>
</dbReference>
<dbReference type="SMR" id="P49551"/>
<dbReference type="GeneID" id="801805"/>
<dbReference type="GO" id="GO:0009507">
    <property type="term" value="C:chloroplast"/>
    <property type="evidence" value="ECO:0007669"/>
    <property type="project" value="UniProtKB-SubCell"/>
</dbReference>
<dbReference type="GO" id="GO:0005762">
    <property type="term" value="C:mitochondrial large ribosomal subunit"/>
    <property type="evidence" value="ECO:0007669"/>
    <property type="project" value="TreeGrafter"/>
</dbReference>
<dbReference type="GO" id="GO:0003729">
    <property type="term" value="F:mRNA binding"/>
    <property type="evidence" value="ECO:0007669"/>
    <property type="project" value="TreeGrafter"/>
</dbReference>
<dbReference type="GO" id="GO:0003735">
    <property type="term" value="F:structural constituent of ribosome"/>
    <property type="evidence" value="ECO:0007669"/>
    <property type="project" value="InterPro"/>
</dbReference>
<dbReference type="GO" id="GO:0017148">
    <property type="term" value="P:negative regulation of translation"/>
    <property type="evidence" value="ECO:0007669"/>
    <property type="project" value="TreeGrafter"/>
</dbReference>
<dbReference type="GO" id="GO:0006412">
    <property type="term" value="P:translation"/>
    <property type="evidence" value="ECO:0007669"/>
    <property type="project" value="UniProtKB-UniRule"/>
</dbReference>
<dbReference type="CDD" id="cd00392">
    <property type="entry name" value="Ribosomal_L13"/>
    <property type="match status" value="1"/>
</dbReference>
<dbReference type="Gene3D" id="3.90.1180.10">
    <property type="entry name" value="Ribosomal protein L13"/>
    <property type="match status" value="1"/>
</dbReference>
<dbReference type="HAMAP" id="MF_01366">
    <property type="entry name" value="Ribosomal_uL13"/>
    <property type="match status" value="1"/>
</dbReference>
<dbReference type="InterPro" id="IPR005822">
    <property type="entry name" value="Ribosomal_uL13"/>
</dbReference>
<dbReference type="InterPro" id="IPR005823">
    <property type="entry name" value="Ribosomal_uL13_bac-type"/>
</dbReference>
<dbReference type="InterPro" id="IPR023563">
    <property type="entry name" value="Ribosomal_uL13_CS"/>
</dbReference>
<dbReference type="InterPro" id="IPR036899">
    <property type="entry name" value="Ribosomal_uL13_sf"/>
</dbReference>
<dbReference type="NCBIfam" id="TIGR01066">
    <property type="entry name" value="rplM_bact"/>
    <property type="match status" value="1"/>
</dbReference>
<dbReference type="PANTHER" id="PTHR11545:SF41">
    <property type="entry name" value="50S RIBOSOMAL PROTEIN L13, CHLOROPLASTIC"/>
    <property type="match status" value="1"/>
</dbReference>
<dbReference type="PANTHER" id="PTHR11545">
    <property type="entry name" value="RIBOSOMAL PROTEIN L13"/>
    <property type="match status" value="1"/>
</dbReference>
<dbReference type="Pfam" id="PF00572">
    <property type="entry name" value="Ribosomal_L13"/>
    <property type="match status" value="1"/>
</dbReference>
<dbReference type="PIRSF" id="PIRSF002181">
    <property type="entry name" value="Ribosomal_L13"/>
    <property type="match status" value="1"/>
</dbReference>
<dbReference type="SUPFAM" id="SSF52161">
    <property type="entry name" value="Ribosomal protein L13"/>
    <property type="match status" value="1"/>
</dbReference>
<dbReference type="PROSITE" id="PS00783">
    <property type="entry name" value="RIBOSOMAL_L13"/>
    <property type="match status" value="1"/>
</dbReference>
<organism>
    <name type="scientific">Trieres chinensis</name>
    <name type="common">Marine centric diatom</name>
    <name type="synonym">Odontella sinensis</name>
    <dbReference type="NCBI Taxonomy" id="1514140"/>
    <lineage>
        <taxon>Eukaryota</taxon>
        <taxon>Sar</taxon>
        <taxon>Stramenopiles</taxon>
        <taxon>Ochrophyta</taxon>
        <taxon>Bacillariophyta</taxon>
        <taxon>Mediophyceae</taxon>
        <taxon>Biddulphiophycidae</taxon>
        <taxon>Eupodiscales</taxon>
        <taxon>Parodontellaceae</taxon>
        <taxon>Trieres</taxon>
    </lineage>
</organism>
<reference key="1">
    <citation type="journal article" date="1995" name="Plant Mol. Biol. Rep.">
        <title>The chloroplast genome of a chlorophyll a+c-containing alga, Odontella sinensis.</title>
        <authorList>
            <person name="Kowallik K.V."/>
            <person name="Stoebe B."/>
            <person name="Schaffran I."/>
            <person name="Kroth-Pancic P."/>
            <person name="Freier U."/>
        </authorList>
    </citation>
    <scope>NUCLEOTIDE SEQUENCE [LARGE SCALE GENOMIC DNA]</scope>
</reference>
<name>RK13_TRICV</name>
<proteinExistence type="inferred from homology"/>
<accession>P49551</accession>